<evidence type="ECO:0000250" key="1"/>
<evidence type="ECO:0000255" key="2">
    <source>
        <dbReference type="HAMAP-Rule" id="MF_00403"/>
    </source>
</evidence>
<evidence type="ECO:0000256" key="3">
    <source>
        <dbReference type="SAM" id="MobiDB-lite"/>
    </source>
</evidence>
<evidence type="ECO:0000305" key="4"/>
<comment type="function">
    <text evidence="2">With S4 and S5 plays an important role in translational accuracy.</text>
</comment>
<comment type="function">
    <text evidence="2">Interacts with and stabilizes bases of the 16S rRNA that are involved in tRNA selection in the A site and with the mRNA backbone. Located at the interface of the 30S and 50S subunits, it traverses the body of the 30S subunit contacting proteins on the other side and probably holding the rRNA structure together. The combined cluster of proteins S8, S12 and S17 appears to hold together the shoulder and platform of the 30S subunit.</text>
</comment>
<comment type="subunit">
    <text evidence="2">Part of the 30S ribosomal subunit. Contacts proteins S8 and S17. May interact with IF1 in the 30S initiation complex.</text>
</comment>
<comment type="similarity">
    <text evidence="2">Belongs to the universal ribosomal protein uS12 family.</text>
</comment>
<gene>
    <name evidence="2" type="primary">rpsL</name>
    <name type="ordered locus">CD630_00680</name>
</gene>
<reference key="1">
    <citation type="journal article" date="2006" name="Nat. Genet.">
        <title>The multidrug-resistant human pathogen Clostridium difficile has a highly mobile, mosaic genome.</title>
        <authorList>
            <person name="Sebaihia M."/>
            <person name="Wren B.W."/>
            <person name="Mullany P."/>
            <person name="Fairweather N.F."/>
            <person name="Minton N."/>
            <person name="Stabler R."/>
            <person name="Thomson N.R."/>
            <person name="Roberts A.P."/>
            <person name="Cerdeno-Tarraga A.M."/>
            <person name="Wang H."/>
            <person name="Holden M.T.G."/>
            <person name="Wright A."/>
            <person name="Churcher C."/>
            <person name="Quail M.A."/>
            <person name="Baker S."/>
            <person name="Bason N."/>
            <person name="Brooks K."/>
            <person name="Chillingworth T."/>
            <person name="Cronin A."/>
            <person name="Davis P."/>
            <person name="Dowd L."/>
            <person name="Fraser A."/>
            <person name="Feltwell T."/>
            <person name="Hance Z."/>
            <person name="Holroyd S."/>
            <person name="Jagels K."/>
            <person name="Moule S."/>
            <person name="Mungall K."/>
            <person name="Price C."/>
            <person name="Rabbinowitsch E."/>
            <person name="Sharp S."/>
            <person name="Simmonds M."/>
            <person name="Stevens K."/>
            <person name="Unwin L."/>
            <person name="Whithead S."/>
            <person name="Dupuy B."/>
            <person name="Dougan G."/>
            <person name="Barrell B."/>
            <person name="Parkhill J."/>
        </authorList>
    </citation>
    <scope>NUCLEOTIDE SEQUENCE [LARGE SCALE GENOMIC DNA]</scope>
    <source>
        <strain>630</strain>
    </source>
</reference>
<protein>
    <recommendedName>
        <fullName evidence="2">Small ribosomal subunit protein uS12</fullName>
    </recommendedName>
    <alternativeName>
        <fullName evidence="4">30S ribosomal protein S12</fullName>
    </alternativeName>
</protein>
<accession>Q18CF2</accession>
<organism>
    <name type="scientific">Clostridioides difficile (strain 630)</name>
    <name type="common">Peptoclostridium difficile</name>
    <dbReference type="NCBI Taxonomy" id="272563"/>
    <lineage>
        <taxon>Bacteria</taxon>
        <taxon>Bacillati</taxon>
        <taxon>Bacillota</taxon>
        <taxon>Clostridia</taxon>
        <taxon>Peptostreptococcales</taxon>
        <taxon>Peptostreptococcaceae</taxon>
        <taxon>Clostridioides</taxon>
    </lineage>
</organism>
<feature type="chain" id="PRO_0000263549" description="Small ribosomal subunit protein uS12">
    <location>
        <begin position="1"/>
        <end position="140"/>
    </location>
</feature>
<feature type="region of interest" description="Disordered" evidence="3">
    <location>
        <begin position="1"/>
        <end position="28"/>
    </location>
</feature>
<feature type="region of interest" description="Disordered" evidence="3">
    <location>
        <begin position="119"/>
        <end position="140"/>
    </location>
</feature>
<feature type="compositionally biased region" description="Basic residues" evidence="3">
    <location>
        <begin position="124"/>
        <end position="140"/>
    </location>
</feature>
<feature type="modified residue" description="3-methylthioaspartic acid" evidence="1">
    <location>
        <position position="102"/>
    </location>
</feature>
<name>RS12_CLOD6</name>
<keyword id="KW-0488">Methylation</keyword>
<keyword id="KW-1185">Reference proteome</keyword>
<keyword id="KW-0687">Ribonucleoprotein</keyword>
<keyword id="KW-0689">Ribosomal protein</keyword>
<keyword id="KW-0694">RNA-binding</keyword>
<keyword id="KW-0699">rRNA-binding</keyword>
<keyword id="KW-0820">tRNA-binding</keyword>
<proteinExistence type="inferred from homology"/>
<sequence length="140" mass="15464">MPTINQLVRKSRKALEKKSTAPALQKGYNSLNKKVTDASAPQKRGVCTSVKTVTPRKPNSALRKVARVRLTNGIEVSAYIPGEGHNLQEHSVVLIRGGRVKDLPGVRYHILRGTLDTAGVDKRRQSRSKYGAKRPKEAKK</sequence>
<dbReference type="EMBL" id="AM180355">
    <property type="protein sequence ID" value="CAJ66883.2"/>
    <property type="molecule type" value="Genomic_DNA"/>
</dbReference>
<dbReference type="RefSeq" id="WP_011860632.1">
    <property type="nucleotide sequence ID" value="NZ_JAUPES010000049.1"/>
</dbReference>
<dbReference type="RefSeq" id="YP_001086532.2">
    <property type="nucleotide sequence ID" value="NC_009089.1"/>
</dbReference>
<dbReference type="SMR" id="Q18CF2"/>
<dbReference type="STRING" id="272563.CD630_00680"/>
<dbReference type="EnsemblBacteria" id="CAJ66883">
    <property type="protein sequence ID" value="CAJ66883"/>
    <property type="gene ID" value="CD630_00680"/>
</dbReference>
<dbReference type="KEGG" id="cdf:CD630_00680"/>
<dbReference type="KEGG" id="pdc:CDIF630_00134"/>
<dbReference type="PATRIC" id="fig|272563.120.peg.74"/>
<dbReference type="eggNOG" id="COG0048">
    <property type="taxonomic scope" value="Bacteria"/>
</dbReference>
<dbReference type="OrthoDB" id="9802366at2"/>
<dbReference type="PhylomeDB" id="Q18CF2"/>
<dbReference type="BioCyc" id="PDIF272563:G12WB-122-MONOMER"/>
<dbReference type="Proteomes" id="UP000001978">
    <property type="component" value="Chromosome"/>
</dbReference>
<dbReference type="GO" id="GO:0015935">
    <property type="term" value="C:small ribosomal subunit"/>
    <property type="evidence" value="ECO:0007669"/>
    <property type="project" value="InterPro"/>
</dbReference>
<dbReference type="GO" id="GO:0019843">
    <property type="term" value="F:rRNA binding"/>
    <property type="evidence" value="ECO:0007669"/>
    <property type="project" value="UniProtKB-UniRule"/>
</dbReference>
<dbReference type="GO" id="GO:0003735">
    <property type="term" value="F:structural constituent of ribosome"/>
    <property type="evidence" value="ECO:0007669"/>
    <property type="project" value="InterPro"/>
</dbReference>
<dbReference type="GO" id="GO:0000049">
    <property type="term" value="F:tRNA binding"/>
    <property type="evidence" value="ECO:0007669"/>
    <property type="project" value="UniProtKB-UniRule"/>
</dbReference>
<dbReference type="GO" id="GO:0006412">
    <property type="term" value="P:translation"/>
    <property type="evidence" value="ECO:0007669"/>
    <property type="project" value="UniProtKB-UniRule"/>
</dbReference>
<dbReference type="CDD" id="cd03368">
    <property type="entry name" value="Ribosomal_S12"/>
    <property type="match status" value="1"/>
</dbReference>
<dbReference type="FunFam" id="2.40.50.140:FF:000001">
    <property type="entry name" value="30S ribosomal protein S12"/>
    <property type="match status" value="1"/>
</dbReference>
<dbReference type="Gene3D" id="2.40.50.140">
    <property type="entry name" value="Nucleic acid-binding proteins"/>
    <property type="match status" value="1"/>
</dbReference>
<dbReference type="HAMAP" id="MF_00403_B">
    <property type="entry name" value="Ribosomal_uS12_B"/>
    <property type="match status" value="1"/>
</dbReference>
<dbReference type="InterPro" id="IPR012340">
    <property type="entry name" value="NA-bd_OB-fold"/>
</dbReference>
<dbReference type="InterPro" id="IPR006032">
    <property type="entry name" value="Ribosomal_uS12"/>
</dbReference>
<dbReference type="InterPro" id="IPR005679">
    <property type="entry name" value="Ribosomal_uS12_bac"/>
</dbReference>
<dbReference type="NCBIfam" id="TIGR00981">
    <property type="entry name" value="rpsL_bact"/>
    <property type="match status" value="1"/>
</dbReference>
<dbReference type="PANTHER" id="PTHR11652">
    <property type="entry name" value="30S RIBOSOMAL PROTEIN S12 FAMILY MEMBER"/>
    <property type="match status" value="1"/>
</dbReference>
<dbReference type="Pfam" id="PF00164">
    <property type="entry name" value="Ribosom_S12_S23"/>
    <property type="match status" value="1"/>
</dbReference>
<dbReference type="PIRSF" id="PIRSF002133">
    <property type="entry name" value="Ribosomal_S12/S23"/>
    <property type="match status" value="1"/>
</dbReference>
<dbReference type="PRINTS" id="PR01034">
    <property type="entry name" value="RIBOSOMALS12"/>
</dbReference>
<dbReference type="SUPFAM" id="SSF50249">
    <property type="entry name" value="Nucleic acid-binding proteins"/>
    <property type="match status" value="1"/>
</dbReference>
<dbReference type="PROSITE" id="PS00055">
    <property type="entry name" value="RIBOSOMAL_S12"/>
    <property type="match status" value="1"/>
</dbReference>